<organism evidence="4">
    <name type="scientific">Giardia intestinalis (strain ATCC 50803 / WB clone C6)</name>
    <name type="common">Giardia lamblia</name>
    <dbReference type="NCBI Taxonomy" id="184922"/>
    <lineage>
        <taxon>Eukaryota</taxon>
        <taxon>Metamonada</taxon>
        <taxon>Diplomonadida</taxon>
        <taxon>Hexamitidae</taxon>
        <taxon>Giardiinae</taxon>
        <taxon>Giardia</taxon>
    </lineage>
</organism>
<feature type="chain" id="PRO_0000459119" description="Gamma-tubulin small complex component GCP3">
    <location>
        <begin position="1"/>
        <end position="892"/>
    </location>
</feature>
<reference evidence="4 6" key="1">
    <citation type="journal article" date="2007" name="Science">
        <title>Genomic minimalism in the early diverging intestinal parasite Giardia lamblia.</title>
        <authorList>
            <person name="Morrison H.G."/>
            <person name="McArthur A.G."/>
            <person name="Gillin F.D."/>
            <person name="Aley S.B."/>
            <person name="Adam R.D."/>
            <person name="Olsen G.J."/>
            <person name="Best A.A."/>
            <person name="Cande W.Z."/>
            <person name="Chen F."/>
            <person name="Cipriano M.J."/>
            <person name="Davids B.J."/>
            <person name="Dawson S.C."/>
            <person name="Elmendorf H.G."/>
            <person name="Hehl A.B."/>
            <person name="Holder M.E."/>
            <person name="Huse S.M."/>
            <person name="Kim U.U."/>
            <person name="Lasek-Nesselquist E."/>
            <person name="Manning G."/>
            <person name="Nigam A."/>
            <person name="Nixon J.E.J."/>
            <person name="Palm D."/>
            <person name="Passamaneck N.E."/>
            <person name="Prabhu A."/>
            <person name="Reich C.I."/>
            <person name="Reiner D.S."/>
            <person name="Samuelson J."/>
            <person name="Svard S.G."/>
            <person name="Sogin M.L."/>
        </authorList>
    </citation>
    <scope>NUCLEOTIDE SEQUENCE [LARGE SCALE GENOMIC DNA]</scope>
    <source>
        <strain evidence="6">ATCC 50803 / WB clone C6</strain>
    </source>
</reference>
<reference evidence="5" key="2">
    <citation type="submission" date="2019-07" db="EMBL/GenBank/DDBJ databases">
        <title>New Giardia intestinalis WB genome in near-complete chromosomes.</title>
        <authorList>
            <person name="Xu F."/>
            <person name="Jex A."/>
            <person name="Svard S.G."/>
        </authorList>
    </citation>
    <scope>NUCLEOTIDE SEQUENCE [LARGE SCALE GENOMIC DNA]</scope>
    <source>
        <strain evidence="5">ATCC 50803 / WB clone C6</strain>
    </source>
</reference>
<reference key="3">
    <citation type="journal article" date="2019" name="MicrobiologyOpen">
        <title>Roles of end-binding 1 protein and gamma-tubulin small complex in cytokinesis and flagella formation of Giardia lamblia.</title>
        <authorList>
            <person name="Kim J."/>
            <person name="Park S.J."/>
        </authorList>
    </citation>
    <scope>PEPTIDE SYNTHESIS OF 121-139</scope>
    <scope>FUNCTION</scope>
    <scope>SUBUNIT</scope>
    <scope>INTERACTION WITH TUBULIN GAMMA CHAIN</scope>
    <scope>SUBCELLULAR LOCATION</scope>
    <scope>DISRUPTION PHENOTYPE</scope>
    <source>
        <strain evidence="3">ATCC 30957 / WB</strain>
    </source>
</reference>
<evidence type="ECO:0000255" key="1">
    <source>
        <dbReference type="RuleBase" id="RU363050"/>
    </source>
</evidence>
<evidence type="ECO:0000269" key="2">
    <source>
    </source>
</evidence>
<evidence type="ECO:0000303" key="3">
    <source>
    </source>
</evidence>
<evidence type="ECO:0000312" key="4">
    <source>
        <dbReference type="EMBL" id="EDO79615.1"/>
    </source>
</evidence>
<evidence type="ECO:0000312" key="5">
    <source>
        <dbReference type="EMBL" id="KAE8303420.1"/>
    </source>
</evidence>
<evidence type="ECO:0000312" key="6">
    <source>
        <dbReference type="Proteomes" id="UP000001548"/>
    </source>
</evidence>
<sequence length="892" mass="101156">MLETILALLREILHREPSKEERQLFFTLLSSNFPVPPLDDWNTVAGIRLAVLGNPVESRRVDSCLKELSENKALKNVRSTLYVLRLLANQSKAFVLATPHNLLVQDNTQTTMQSAPLTTTKTNKLHGKSKHKSKKSIRSILFKDFDSTSEESDTETSAVEACMARIDQKETSTRLIPNESSGKLSKDTILEHAIVRDLIYAMQGLPGQYFELIKDPTSGISHFVLQRQYQSLSVSQTAATFCERIASCGFFYTRCTELLNAVTKTNMGKTRASLCEALHTGLSEYRQRISLLDSQLTEEQMTLVELTAVANLIREEISTLAVIADNCLYDKSLTSPQILNIIFGYSLHGDRKMHHIGQSLLIKASEPFFDYLKHWIIEGSLLSTEYFIQPTTSNSTDILILQTNNLLVSRSIFINSNWYNKFHISSSPDLKTHPLLSPYVTKLCFEIGRASAFLREDCNNITWRFPESIVALIREANFAKLLSSYSSDASEGTVKLIRSIHMLSSKAVVAIIKRQFLLFDHLNGILYILLGMQGDFIPSLCSILSSTSGGDKYKLSMLEKIEQAMMSCNVSNLPSHVLGCVDVRIDNSKSNFYVTYSIKDPLTSIITPGQIRIYETIFQIQWRLRSADDKLDQIILLTNFFYRRNTQQILTNAGRVGIFRLHYRTLTEEVPLAYTLYVARLSCIRNRTKQLVLALLNYISHDCIAPEYMTLFANLEAAETIKDIIYYHDIAVRTICYKMLISINYHKMADAPLPAPKESSGHHPRQLRSCDIYNGQVMFTDKTISIFSDFHTSLVKICAQIALLHGSVAELFNFQSIFTQDFTMKLQEAANFLDAYVRSFNTELNTMITCLQRCRSIPIPVLDEFDYSHYENLEASLLAVGMHSETHSSHKR</sequence>
<name>GCP3_GIAIC</name>
<dbReference type="EMBL" id="AACB02000015">
    <property type="protein sequence ID" value="EDO79615.1"/>
    <property type="molecule type" value="Genomic_DNA"/>
</dbReference>
<dbReference type="EMBL" id="AACB03000002">
    <property type="protein sequence ID" value="KAE8303420.1"/>
    <property type="molecule type" value="Genomic_DNA"/>
</dbReference>
<dbReference type="RefSeq" id="XP_001707289.1">
    <property type="nucleotide sequence ID" value="XM_001707237.1"/>
</dbReference>
<dbReference type="FunCoup" id="A8BFK8">
    <property type="interactions" value="201"/>
</dbReference>
<dbReference type="STRING" id="184922.A8BFK8"/>
<dbReference type="EnsemblProtists" id="EDO79615">
    <property type="protein sequence ID" value="EDO79615"/>
    <property type="gene ID" value="GL50803_12057"/>
</dbReference>
<dbReference type="GeneID" id="5700188"/>
<dbReference type="KEGG" id="gla:GL50803_0012057"/>
<dbReference type="VEuPathDB" id="GiardiaDB:GL50803_12057"/>
<dbReference type="HOGENOM" id="CLU_324025_0_0_1"/>
<dbReference type="InParanoid" id="A8BFK8"/>
<dbReference type="OMA" id="YIFHECL"/>
<dbReference type="Proteomes" id="UP000001548">
    <property type="component" value="Chromosome 4"/>
</dbReference>
<dbReference type="GO" id="GO:0097729">
    <property type="term" value="C:9+2 motile cilium"/>
    <property type="evidence" value="ECO:0000314"/>
    <property type="project" value="UniProtKB"/>
</dbReference>
<dbReference type="GO" id="GO:0005930">
    <property type="term" value="C:axoneme"/>
    <property type="evidence" value="ECO:0000314"/>
    <property type="project" value="UniProtKB"/>
</dbReference>
<dbReference type="GO" id="GO:0036064">
    <property type="term" value="C:ciliary basal body"/>
    <property type="evidence" value="ECO:0000314"/>
    <property type="project" value="UniProtKB"/>
</dbReference>
<dbReference type="GO" id="GO:0000930">
    <property type="term" value="C:gamma-tubulin complex"/>
    <property type="evidence" value="ECO:0000318"/>
    <property type="project" value="GO_Central"/>
</dbReference>
<dbReference type="GO" id="GO:0008275">
    <property type="term" value="C:gamma-tubulin small complex"/>
    <property type="evidence" value="ECO:0000314"/>
    <property type="project" value="UniProtKB"/>
</dbReference>
<dbReference type="GO" id="GO:0097568">
    <property type="term" value="C:median body"/>
    <property type="evidence" value="ECO:0000314"/>
    <property type="project" value="UniProtKB"/>
</dbReference>
<dbReference type="GO" id="GO:0005874">
    <property type="term" value="C:microtubule"/>
    <property type="evidence" value="ECO:0007669"/>
    <property type="project" value="UniProtKB-KW"/>
</dbReference>
<dbReference type="GO" id="GO:0000922">
    <property type="term" value="C:spindle pole"/>
    <property type="evidence" value="ECO:0007669"/>
    <property type="project" value="InterPro"/>
</dbReference>
<dbReference type="GO" id="GO:0043015">
    <property type="term" value="F:gamma-tubulin binding"/>
    <property type="evidence" value="ECO:0000314"/>
    <property type="project" value="UniProtKB"/>
</dbReference>
<dbReference type="GO" id="GO:0031122">
    <property type="term" value="P:cytoplasmic microtubule organization"/>
    <property type="evidence" value="ECO:0000315"/>
    <property type="project" value="UniProtKB"/>
</dbReference>
<dbReference type="GO" id="GO:0051321">
    <property type="term" value="P:meiotic cell cycle"/>
    <property type="evidence" value="ECO:0000318"/>
    <property type="project" value="GO_Central"/>
</dbReference>
<dbReference type="GO" id="GO:0007020">
    <property type="term" value="P:microtubule nucleation"/>
    <property type="evidence" value="ECO:0000315"/>
    <property type="project" value="UniProtKB"/>
</dbReference>
<dbReference type="GO" id="GO:0000278">
    <property type="term" value="P:mitotic cell cycle"/>
    <property type="evidence" value="ECO:0000314"/>
    <property type="project" value="UniProtKB"/>
</dbReference>
<dbReference type="GO" id="GO:1902410">
    <property type="term" value="P:mitotic cytokinetic process"/>
    <property type="evidence" value="ECO:0000315"/>
    <property type="project" value="UniProtKB"/>
</dbReference>
<dbReference type="GO" id="GO:0044458">
    <property type="term" value="P:motile cilium assembly"/>
    <property type="evidence" value="ECO:0000315"/>
    <property type="project" value="UniProtKB"/>
</dbReference>
<dbReference type="GO" id="GO:0051225">
    <property type="term" value="P:spindle assembly"/>
    <property type="evidence" value="ECO:0000318"/>
    <property type="project" value="GO_Central"/>
</dbReference>
<dbReference type="Gene3D" id="1.20.120.1900">
    <property type="entry name" value="Gamma-tubulin complex, C-terminal domain"/>
    <property type="match status" value="1"/>
</dbReference>
<dbReference type="InterPro" id="IPR007259">
    <property type="entry name" value="GCP"/>
</dbReference>
<dbReference type="InterPro" id="IPR040457">
    <property type="entry name" value="GCP_C"/>
</dbReference>
<dbReference type="InterPro" id="IPR042241">
    <property type="entry name" value="GCP_C_sf"/>
</dbReference>
<dbReference type="InterPro" id="IPR041470">
    <property type="entry name" value="GCP_N"/>
</dbReference>
<dbReference type="PANTHER" id="PTHR19302">
    <property type="entry name" value="GAMMA TUBULIN COMPLEX PROTEIN"/>
    <property type="match status" value="1"/>
</dbReference>
<dbReference type="PANTHER" id="PTHR19302:SF14">
    <property type="entry name" value="GAMMA-TUBULIN COMPLEX COMPONENT 3"/>
    <property type="match status" value="1"/>
</dbReference>
<dbReference type="Pfam" id="PF04130">
    <property type="entry name" value="GCP_C_terminal"/>
    <property type="match status" value="1"/>
</dbReference>
<dbReference type="Pfam" id="PF17681">
    <property type="entry name" value="GCP_N_terminal"/>
    <property type="match status" value="1"/>
</dbReference>
<proteinExistence type="evidence at protein level"/>
<keyword id="KW-0966">Cell projection</keyword>
<keyword id="KW-0969">Cilium</keyword>
<keyword id="KW-0963">Cytoplasm</keyword>
<keyword id="KW-0206">Cytoskeleton</keyword>
<keyword id="KW-0282">Flagellum</keyword>
<keyword id="KW-0493">Microtubule</keyword>
<keyword id="KW-1185">Reference proteome</keyword>
<protein>
    <recommendedName>
        <fullName evidence="3">Gamma-tubulin small complex component GCP3</fullName>
        <shortName evidence="3">Gamma-TuSC component GCP3</shortName>
    </recommendedName>
    <alternativeName>
        <fullName evidence="3">Gamma-tubulin complex protein 3</fullName>
        <shortName evidence="3">GCP3</shortName>
    </alternativeName>
    <alternativeName>
        <fullName evidence="3">GlGCP3</fullName>
    </alternativeName>
</protein>
<accession>A8BFK8</accession>
<gene>
    <name evidence="5" type="ORF">GL50803_0012057</name>
    <name evidence="4" type="ORF">GL50803_12057</name>
</gene>
<comment type="function">
    <text evidence="2">Component of the gamma-tubulin small complex (gamma-TuSC) involved in microtubule (MT) nucleation for the formation of median bodies and in the biogenesis of flagella. Gamma-TuSC may be required for the correct positioning of EB1 within the trophozoites.</text>
</comment>
<comment type="subunit">
    <text evidence="2">Component of the gamma-tubulin small complex (gamma-TuSC) composed of tubulin gamma chain, gamma-tubulin complex protein 2 (GCP2) and gamma-tubulin complex protein 3 (GCP3). Interacts with tubulin gamma chain.</text>
</comment>
<comment type="subcellular location">
    <subcellularLocation>
        <location evidence="2">Cytoplasm</location>
        <location evidence="2">Cytoskeleton</location>
        <location evidence="2">Flagellum axoneme</location>
    </subcellularLocation>
    <subcellularLocation>
        <location evidence="2">Cytoplasm</location>
        <location evidence="2">Cytoskeleton</location>
        <location evidence="2">Flagellum basal body</location>
    </subcellularLocation>
    <subcellularLocation>
        <location evidence="2">Cytoplasm</location>
        <location evidence="2">Cytoskeleton</location>
    </subcellularLocation>
    <text evidence="2">Localizes to basal bodies, axonemes and median bodies of the trophozoites during interface. Colocalizes with tubulin gamma chain.</text>
</comment>
<comment type="disruption phenotype">
    <text evidence="2">Knockdown of expression by morpholino results in increased number of cells arrested in cytokinesis, reduced volume of median bodies, increase in disorganized cells impertinent for cytokinesis, and reduced length of the caudal flagella. However, knockdown does not have an effect on the number of cells defective in cytokinesis or abscission.</text>
</comment>
<comment type="similarity">
    <text evidence="1">Belongs to the TUBGCP family.</text>
</comment>